<feature type="chain" id="PRO_0000398713" description="Phosphoenolpyruvate guanylyltransferase">
    <location>
        <begin position="1"/>
        <end position="284"/>
    </location>
</feature>
<feature type="region of interest" description="Disordered" evidence="2">
    <location>
        <begin position="94"/>
        <end position="123"/>
    </location>
</feature>
<feature type="compositionally biased region" description="Basic and acidic residues" evidence="2">
    <location>
        <begin position="105"/>
        <end position="114"/>
    </location>
</feature>
<feature type="binding site" evidence="1">
    <location>
        <position position="203"/>
    </location>
    <ligand>
        <name>phosphoenolpyruvate</name>
        <dbReference type="ChEBI" id="CHEBI:58702"/>
    </ligand>
</feature>
<feature type="binding site" evidence="1">
    <location>
        <position position="219"/>
    </location>
    <ligand>
        <name>phosphoenolpyruvate</name>
        <dbReference type="ChEBI" id="CHEBI:58702"/>
    </ligand>
</feature>
<feature type="binding site" evidence="1">
    <location>
        <position position="222"/>
    </location>
    <ligand>
        <name>phosphoenolpyruvate</name>
        <dbReference type="ChEBI" id="CHEBI:58702"/>
    </ligand>
</feature>
<proteinExistence type="inferred from homology"/>
<accession>D1BJD0</accession>
<gene>
    <name evidence="1" type="primary">fbiD</name>
    <name type="ordered locus">Sked_24100</name>
</gene>
<protein>
    <recommendedName>
        <fullName evidence="1">Phosphoenolpyruvate guanylyltransferase</fullName>
        <shortName evidence="1">PEP guanylyltransferase</shortName>
        <ecNumber evidence="1">2.7.7.105</ecNumber>
    </recommendedName>
</protein>
<organism>
    <name type="scientific">Sanguibacter keddieii (strain ATCC 51767 / DSM 10542 / NCFB 3025 / ST-74)</name>
    <dbReference type="NCBI Taxonomy" id="446469"/>
    <lineage>
        <taxon>Bacteria</taxon>
        <taxon>Bacillati</taxon>
        <taxon>Actinomycetota</taxon>
        <taxon>Actinomycetes</taxon>
        <taxon>Micrococcales</taxon>
        <taxon>Sanguibacteraceae</taxon>
        <taxon>Sanguibacter</taxon>
    </lineage>
</organism>
<reference key="1">
    <citation type="journal article" date="2009" name="Stand. Genomic Sci.">
        <title>Complete genome sequence of Sanguibacter keddieii type strain (ST-74).</title>
        <authorList>
            <person name="Ivanova N."/>
            <person name="Sikorski J."/>
            <person name="Sims D."/>
            <person name="Brettin T."/>
            <person name="Detter J.C."/>
            <person name="Han C."/>
            <person name="Lapidus A."/>
            <person name="Copeland A."/>
            <person name="Glavina Del Rio T."/>
            <person name="Nolan M."/>
            <person name="Chen F."/>
            <person name="Lucas S."/>
            <person name="Tice H."/>
            <person name="Cheng J.F."/>
            <person name="Bruce D."/>
            <person name="Goodwin L."/>
            <person name="Pitluck S."/>
            <person name="Pati A."/>
            <person name="Mavromatis K."/>
            <person name="Chen A."/>
            <person name="Palaniappan K."/>
            <person name="D'haeseleer P."/>
            <person name="Chain P."/>
            <person name="Bristow J."/>
            <person name="Eisen J.A."/>
            <person name="Markowitz V."/>
            <person name="Hugenholtz P."/>
            <person name="Goker M."/>
            <person name="Pukall R."/>
            <person name="Klenk H.P."/>
            <person name="Kyrpides N.C."/>
        </authorList>
    </citation>
    <scope>NUCLEOTIDE SEQUENCE [LARGE SCALE GENOMIC DNA]</scope>
    <source>
        <strain>ATCC 51767 / DSM 10542 / NCFB 3025 / ST-74</strain>
    </source>
</reference>
<sequence>MSAEQQAVVSAEQQAVVSAEQPAVVSADQPAVTWTVVVPVKVTSQAKTRLAGDLSPTQRVELVRAMVVDTVAAARATPTVDRVVVVTDDPDVVADLSADEPAGTDAERRADPSAENRASTSAQHPCLRAHLDVVPEPSPAAGLNAAIRAGVASARSGGGLAAVSVAVLLGDLPALRPGDLGAALEAASAHHRAVVTDADGSGTTLLTARSGVELYPAFGPGSAAEHAARGHVVLDVADVPAVSGLRQDVDLARDLAAVAALGPGPRTTEVLDRWARLGEGSSAA</sequence>
<dbReference type="EC" id="2.7.7.105" evidence="1"/>
<dbReference type="EMBL" id="CP001819">
    <property type="protein sequence ID" value="ACZ22324.1"/>
    <property type="molecule type" value="Genomic_DNA"/>
</dbReference>
<dbReference type="RefSeq" id="WP_012867393.1">
    <property type="nucleotide sequence ID" value="NC_013521.1"/>
</dbReference>
<dbReference type="SMR" id="D1BJD0"/>
<dbReference type="STRING" id="446469.Sked_24100"/>
<dbReference type="KEGG" id="ske:Sked_24100"/>
<dbReference type="eggNOG" id="COG1920">
    <property type="taxonomic scope" value="Bacteria"/>
</dbReference>
<dbReference type="HOGENOM" id="CLU_076569_0_0_11"/>
<dbReference type="UniPathway" id="UPA00071"/>
<dbReference type="Proteomes" id="UP000000322">
    <property type="component" value="Chromosome"/>
</dbReference>
<dbReference type="GO" id="GO:0005525">
    <property type="term" value="F:GTP binding"/>
    <property type="evidence" value="ECO:0007669"/>
    <property type="project" value="UniProtKB-KW"/>
</dbReference>
<dbReference type="GO" id="GO:0043814">
    <property type="term" value="F:phospholactate guanylyltransferase activity"/>
    <property type="evidence" value="ECO:0007669"/>
    <property type="project" value="InterPro"/>
</dbReference>
<dbReference type="GO" id="GO:0052645">
    <property type="term" value="P:F420-0 metabolic process"/>
    <property type="evidence" value="ECO:0007669"/>
    <property type="project" value="UniProtKB-UniRule"/>
</dbReference>
<dbReference type="Gene3D" id="3.90.550.10">
    <property type="entry name" value="Spore Coat Polysaccharide Biosynthesis Protein SpsA, Chain A"/>
    <property type="match status" value="1"/>
</dbReference>
<dbReference type="HAMAP" id="MF_02114">
    <property type="entry name" value="CofC"/>
    <property type="match status" value="1"/>
</dbReference>
<dbReference type="InterPro" id="IPR002835">
    <property type="entry name" value="CofC"/>
</dbReference>
<dbReference type="InterPro" id="IPR029044">
    <property type="entry name" value="Nucleotide-diphossugar_trans"/>
</dbReference>
<dbReference type="NCBIfam" id="TIGR03552">
    <property type="entry name" value="F420_cofC"/>
    <property type="match status" value="1"/>
</dbReference>
<dbReference type="PANTHER" id="PTHR40392">
    <property type="entry name" value="2-PHOSPHO-L-LACTATE GUANYLYLTRANSFERASE"/>
    <property type="match status" value="1"/>
</dbReference>
<dbReference type="PANTHER" id="PTHR40392:SF1">
    <property type="entry name" value="2-PHOSPHO-L-LACTATE GUANYLYLTRANSFERASE"/>
    <property type="match status" value="1"/>
</dbReference>
<dbReference type="Pfam" id="PF01983">
    <property type="entry name" value="CofC"/>
    <property type="match status" value="1"/>
</dbReference>
<dbReference type="SUPFAM" id="SSF53448">
    <property type="entry name" value="Nucleotide-diphospho-sugar transferases"/>
    <property type="match status" value="1"/>
</dbReference>
<evidence type="ECO:0000255" key="1">
    <source>
        <dbReference type="HAMAP-Rule" id="MF_02114"/>
    </source>
</evidence>
<evidence type="ECO:0000256" key="2">
    <source>
        <dbReference type="SAM" id="MobiDB-lite"/>
    </source>
</evidence>
<comment type="function">
    <text evidence="1">Guanylyltransferase that catalyzes the activation of phosphoenolpyruvate (PEP) as enolpyruvoyl-2-diphospho-5'-guanosine, via the condensation of PEP with GTP. It is involved in the biosynthesis of coenzyme F420, a hydride carrier cofactor.</text>
</comment>
<comment type="catalytic activity">
    <reaction evidence="1">
        <text>phosphoenolpyruvate + GTP + H(+) = enolpyruvoyl-2-diphospho-5'-guanosine + diphosphate</text>
        <dbReference type="Rhea" id="RHEA:30519"/>
        <dbReference type="ChEBI" id="CHEBI:15378"/>
        <dbReference type="ChEBI" id="CHEBI:33019"/>
        <dbReference type="ChEBI" id="CHEBI:37565"/>
        <dbReference type="ChEBI" id="CHEBI:58702"/>
        <dbReference type="ChEBI" id="CHEBI:143701"/>
        <dbReference type="EC" id="2.7.7.105"/>
    </reaction>
</comment>
<comment type="pathway">
    <text evidence="1">Cofactor biosynthesis; coenzyme F420 biosynthesis.</text>
</comment>
<comment type="similarity">
    <text evidence="1">Belongs to the CofC family.</text>
</comment>
<keyword id="KW-0342">GTP-binding</keyword>
<keyword id="KW-0547">Nucleotide-binding</keyword>
<keyword id="KW-0548">Nucleotidyltransferase</keyword>
<keyword id="KW-0808">Transferase</keyword>
<name>FBID_SANKS</name>